<feature type="chain" id="PRO_0000340607" description="Sulfate adenylyltransferase">
    <location>
        <begin position="1"/>
        <end position="382"/>
    </location>
</feature>
<sequence>MSLAPHGGTLINRVNEQYDLTSVQKEIELDLISFADLELIGIGGYSPIEGFFTEKDYVSVVENMRLASGVVWSLPITLPVDSEKAAELAVGDTVKLTYGGETYGVVDIEDIYTPDKQKEAVHVYKTDDAAHPGVKKLFSRGDTYVGGPITLVKKASKQFPEFTFEPADTRRSFEQKGWKTIVGFQTRNPVHRAHEYIQKTALETVDGLFLNPLVGETKSDDIPADVRMESYQVLLDHYYPKDRVFLGVFLAAMRYAGPREAIFHALVRKNYGCTHFIVGRDHAGVGDYYGTYEAQELFDQFTADELGITPMKFEHSFFCQKCGNMGTAKTCPHDKEDHVILSGTKVREMLRSGVMPPAEFSRPEVVEVLIKGLKTKEEAGVS</sequence>
<gene>
    <name evidence="1" type="primary">sat</name>
    <name type="ordered locus">RBAM_015420</name>
</gene>
<dbReference type="EC" id="2.7.7.4" evidence="1"/>
<dbReference type="EMBL" id="CP000560">
    <property type="protein sequence ID" value="ABS73905.1"/>
    <property type="molecule type" value="Genomic_DNA"/>
</dbReference>
<dbReference type="RefSeq" id="WP_012117523.1">
    <property type="nucleotide sequence ID" value="NC_009725.2"/>
</dbReference>
<dbReference type="SMR" id="A7Z4H9"/>
<dbReference type="GeneID" id="93080675"/>
<dbReference type="KEGG" id="bay:RBAM_015420"/>
<dbReference type="HOGENOM" id="CLU_022950_1_1_9"/>
<dbReference type="UniPathway" id="UPA00140">
    <property type="reaction ID" value="UER00204"/>
</dbReference>
<dbReference type="Proteomes" id="UP000001120">
    <property type="component" value="Chromosome"/>
</dbReference>
<dbReference type="GO" id="GO:0005524">
    <property type="term" value="F:ATP binding"/>
    <property type="evidence" value="ECO:0007669"/>
    <property type="project" value="UniProtKB-KW"/>
</dbReference>
<dbReference type="GO" id="GO:0004781">
    <property type="term" value="F:sulfate adenylyltransferase (ATP) activity"/>
    <property type="evidence" value="ECO:0007669"/>
    <property type="project" value="UniProtKB-UniRule"/>
</dbReference>
<dbReference type="GO" id="GO:0070814">
    <property type="term" value="P:hydrogen sulfide biosynthetic process"/>
    <property type="evidence" value="ECO:0007669"/>
    <property type="project" value="UniProtKB-UniRule"/>
</dbReference>
<dbReference type="GO" id="GO:0000103">
    <property type="term" value="P:sulfate assimilation"/>
    <property type="evidence" value="ECO:0007669"/>
    <property type="project" value="UniProtKB-UniRule"/>
</dbReference>
<dbReference type="CDD" id="cd00517">
    <property type="entry name" value="ATPS"/>
    <property type="match status" value="1"/>
</dbReference>
<dbReference type="Gene3D" id="3.40.50.620">
    <property type="entry name" value="HUPs"/>
    <property type="match status" value="1"/>
</dbReference>
<dbReference type="Gene3D" id="3.10.400.10">
    <property type="entry name" value="Sulfate adenylyltransferase"/>
    <property type="match status" value="1"/>
</dbReference>
<dbReference type="HAMAP" id="MF_00066">
    <property type="entry name" value="Sulf_adenylyltr"/>
    <property type="match status" value="1"/>
</dbReference>
<dbReference type="InterPro" id="IPR025980">
    <property type="entry name" value="ATP-Sase_PUA-like_dom"/>
</dbReference>
<dbReference type="InterPro" id="IPR015947">
    <property type="entry name" value="PUA-like_sf"/>
</dbReference>
<dbReference type="InterPro" id="IPR014729">
    <property type="entry name" value="Rossmann-like_a/b/a_fold"/>
</dbReference>
<dbReference type="InterPro" id="IPR020792">
    <property type="entry name" value="SO4_adenylyltransferase_pro"/>
</dbReference>
<dbReference type="InterPro" id="IPR024951">
    <property type="entry name" value="Sulfurylase_cat_dom"/>
</dbReference>
<dbReference type="InterPro" id="IPR002650">
    <property type="entry name" value="Sulphate_adenylyltransferase"/>
</dbReference>
<dbReference type="NCBIfam" id="NF003166">
    <property type="entry name" value="PRK04149.1"/>
    <property type="match status" value="1"/>
</dbReference>
<dbReference type="NCBIfam" id="TIGR00339">
    <property type="entry name" value="sopT"/>
    <property type="match status" value="1"/>
</dbReference>
<dbReference type="PANTHER" id="PTHR43509">
    <property type="match status" value="1"/>
</dbReference>
<dbReference type="PANTHER" id="PTHR43509:SF1">
    <property type="entry name" value="SULFATE ADENYLYLTRANSFERASE"/>
    <property type="match status" value="1"/>
</dbReference>
<dbReference type="Pfam" id="PF01747">
    <property type="entry name" value="ATP-sulfurylase"/>
    <property type="match status" value="1"/>
</dbReference>
<dbReference type="Pfam" id="PF14306">
    <property type="entry name" value="PUA_2"/>
    <property type="match status" value="1"/>
</dbReference>
<dbReference type="SUPFAM" id="SSF52374">
    <property type="entry name" value="Nucleotidylyl transferase"/>
    <property type="match status" value="1"/>
</dbReference>
<dbReference type="SUPFAM" id="SSF88697">
    <property type="entry name" value="PUA domain-like"/>
    <property type="match status" value="1"/>
</dbReference>
<organism>
    <name type="scientific">Bacillus velezensis (strain DSM 23117 / BGSC 10A6 / LMG 26770 / FZB42)</name>
    <name type="common">Bacillus amyloliquefaciens subsp. plantarum</name>
    <dbReference type="NCBI Taxonomy" id="326423"/>
    <lineage>
        <taxon>Bacteria</taxon>
        <taxon>Bacillati</taxon>
        <taxon>Bacillota</taxon>
        <taxon>Bacilli</taxon>
        <taxon>Bacillales</taxon>
        <taxon>Bacillaceae</taxon>
        <taxon>Bacillus</taxon>
        <taxon>Bacillus amyloliquefaciens group</taxon>
    </lineage>
</organism>
<name>SAT_BACVZ</name>
<accession>A7Z4H9</accession>
<evidence type="ECO:0000255" key="1">
    <source>
        <dbReference type="HAMAP-Rule" id="MF_00066"/>
    </source>
</evidence>
<comment type="catalytic activity">
    <reaction evidence="1">
        <text>sulfate + ATP + H(+) = adenosine 5'-phosphosulfate + diphosphate</text>
        <dbReference type="Rhea" id="RHEA:18133"/>
        <dbReference type="ChEBI" id="CHEBI:15378"/>
        <dbReference type="ChEBI" id="CHEBI:16189"/>
        <dbReference type="ChEBI" id="CHEBI:30616"/>
        <dbReference type="ChEBI" id="CHEBI:33019"/>
        <dbReference type="ChEBI" id="CHEBI:58243"/>
        <dbReference type="EC" id="2.7.7.4"/>
    </reaction>
</comment>
<comment type="pathway">
    <text evidence="1">Sulfur metabolism; hydrogen sulfide biosynthesis; sulfite from sulfate: step 1/3.</text>
</comment>
<comment type="similarity">
    <text evidence="1">Belongs to the sulfate adenylyltransferase family.</text>
</comment>
<reference key="1">
    <citation type="journal article" date="2007" name="Nat. Biotechnol.">
        <title>Comparative analysis of the complete genome sequence of the plant growth-promoting bacterium Bacillus amyloliquefaciens FZB42.</title>
        <authorList>
            <person name="Chen X.H."/>
            <person name="Koumoutsi A."/>
            <person name="Scholz R."/>
            <person name="Eisenreich A."/>
            <person name="Schneider K."/>
            <person name="Heinemeyer I."/>
            <person name="Morgenstern B."/>
            <person name="Voss B."/>
            <person name="Hess W.R."/>
            <person name="Reva O."/>
            <person name="Junge H."/>
            <person name="Voigt B."/>
            <person name="Jungblut P.R."/>
            <person name="Vater J."/>
            <person name="Suessmuth R."/>
            <person name="Liesegang H."/>
            <person name="Strittmatter A."/>
            <person name="Gottschalk G."/>
            <person name="Borriss R."/>
        </authorList>
    </citation>
    <scope>NUCLEOTIDE SEQUENCE [LARGE SCALE GENOMIC DNA]</scope>
    <source>
        <strain>DSM 23117 / BGSC 10A6 / LMG 26770 / FZB42</strain>
    </source>
</reference>
<proteinExistence type="inferred from homology"/>
<keyword id="KW-0067">ATP-binding</keyword>
<keyword id="KW-0547">Nucleotide-binding</keyword>
<keyword id="KW-0548">Nucleotidyltransferase</keyword>
<keyword id="KW-0808">Transferase</keyword>
<protein>
    <recommendedName>
        <fullName evidence="1">Sulfate adenylyltransferase</fullName>
        <ecNumber evidence="1">2.7.7.4</ecNumber>
    </recommendedName>
    <alternativeName>
        <fullName evidence="1">ATP-sulfurylase</fullName>
    </alternativeName>
    <alternativeName>
        <fullName evidence="1">Sulfate adenylate transferase</fullName>
        <shortName evidence="1">SAT</shortName>
    </alternativeName>
</protein>